<dbReference type="EMBL" id="AE014134">
    <property type="protein sequence ID" value="AAF52584.3"/>
    <property type="molecule type" value="Genomic_DNA"/>
</dbReference>
<dbReference type="EMBL" id="AE014134">
    <property type="protein sequence ID" value="AAN10649.2"/>
    <property type="molecule type" value="Genomic_DNA"/>
</dbReference>
<dbReference type="EMBL" id="AE014134">
    <property type="protein sequence ID" value="ACL83014.1"/>
    <property type="molecule type" value="Genomic_DNA"/>
</dbReference>
<dbReference type="EMBL" id="AE014134">
    <property type="protein sequence ID" value="AHN54245.1"/>
    <property type="molecule type" value="Genomic_DNA"/>
</dbReference>
<dbReference type="EMBL" id="AE014134">
    <property type="protein sequence ID" value="AHN54246.1"/>
    <property type="molecule type" value="Genomic_DNA"/>
</dbReference>
<dbReference type="EMBL" id="AY084131">
    <property type="protein sequence ID" value="AAL89869.1"/>
    <property type="status" value="ALT_INIT"/>
    <property type="molecule type" value="mRNA"/>
</dbReference>
<dbReference type="RefSeq" id="NP_001137808.1">
    <property type="nucleotide sequence ID" value="NM_001144336.3"/>
</dbReference>
<dbReference type="RefSeq" id="NP_001285731.1">
    <property type="nucleotide sequence ID" value="NM_001298802.1"/>
</dbReference>
<dbReference type="RefSeq" id="NP_001285732.1">
    <property type="nucleotide sequence ID" value="NM_001298803.1"/>
</dbReference>
<dbReference type="RefSeq" id="NP_609168.2">
    <property type="nucleotide sequence ID" value="NM_135324.3"/>
</dbReference>
<dbReference type="RefSeq" id="NP_723328.2">
    <property type="nucleotide sequence ID" value="NM_164777.3"/>
</dbReference>
<dbReference type="SMR" id="B7Z031"/>
<dbReference type="FunCoup" id="B7Z031">
    <property type="interactions" value="241"/>
</dbReference>
<dbReference type="IntAct" id="B7Z031">
    <property type="interactions" value="2"/>
</dbReference>
<dbReference type="STRING" id="7227.FBpp0289420"/>
<dbReference type="GlyCosmos" id="B7Z031">
    <property type="glycosylation" value="7 sites, No reported glycans"/>
</dbReference>
<dbReference type="GlyGen" id="B7Z031">
    <property type="glycosylation" value="7 sites"/>
</dbReference>
<dbReference type="PaxDb" id="7227-FBpp0289420"/>
<dbReference type="DNASU" id="34087"/>
<dbReference type="EnsemblMetazoa" id="FBtr0114550">
    <property type="protein sequence ID" value="FBpp0113042"/>
    <property type="gene ID" value="FBgn0031969"/>
</dbReference>
<dbReference type="EnsemblMetazoa" id="FBtr0300183">
    <property type="protein sequence ID" value="FBpp0289420"/>
    <property type="gene ID" value="FBgn0031969"/>
</dbReference>
<dbReference type="EnsemblMetazoa" id="FBtr0331674">
    <property type="protein sequence ID" value="FBpp0304064"/>
    <property type="gene ID" value="FBgn0031969"/>
</dbReference>
<dbReference type="EnsemblMetazoa" id="FBtr0344860">
    <property type="protein sequence ID" value="FBpp0311175"/>
    <property type="gene ID" value="FBgn0031969"/>
</dbReference>
<dbReference type="EnsemblMetazoa" id="FBtr0344861">
    <property type="protein sequence ID" value="FBpp0311176"/>
    <property type="gene ID" value="FBgn0031969"/>
</dbReference>
<dbReference type="GeneID" id="34087"/>
<dbReference type="KEGG" id="dme:Dmel_CG7228"/>
<dbReference type="AGR" id="FB:FBgn0031969"/>
<dbReference type="CTD" id="30228"/>
<dbReference type="FlyBase" id="FBgn0031969">
    <property type="gene designation" value="pes"/>
</dbReference>
<dbReference type="VEuPathDB" id="VectorBase:FBgn0031969"/>
<dbReference type="eggNOG" id="KOG3776">
    <property type="taxonomic scope" value="Eukaryota"/>
</dbReference>
<dbReference type="GeneTree" id="ENSGT00940000153372"/>
<dbReference type="HOGENOM" id="CLU_019853_5_2_1"/>
<dbReference type="InParanoid" id="B7Z031"/>
<dbReference type="OMA" id="NFDVYIF"/>
<dbReference type="OrthoDB" id="514335at2759"/>
<dbReference type="PhylomeDB" id="B7Z031"/>
<dbReference type="BioGRID-ORCS" id="34087">
    <property type="hits" value="1 hit in 1 CRISPR screen"/>
</dbReference>
<dbReference type="GenomeRNAi" id="34087"/>
<dbReference type="PRO" id="PR:B7Z031"/>
<dbReference type="Proteomes" id="UP000000803">
    <property type="component" value="Chromosome 2L"/>
</dbReference>
<dbReference type="Bgee" id="FBgn0031969">
    <property type="expression patterns" value="Expressed in dorsal appendage forming follicle cell in ovary and 189 other cell types or tissues"/>
</dbReference>
<dbReference type="ExpressionAtlas" id="B7Z031">
    <property type="expression patterns" value="baseline and differential"/>
</dbReference>
<dbReference type="GO" id="GO:0016020">
    <property type="term" value="C:membrane"/>
    <property type="evidence" value="ECO:0000318"/>
    <property type="project" value="GO_Central"/>
</dbReference>
<dbReference type="GO" id="GO:0005886">
    <property type="term" value="C:plasma membrane"/>
    <property type="evidence" value="ECO:0007669"/>
    <property type="project" value="UniProtKB-SubCell"/>
</dbReference>
<dbReference type="GO" id="GO:0005044">
    <property type="term" value="F:scavenger receptor activity"/>
    <property type="evidence" value="ECO:0000318"/>
    <property type="project" value="GO_Central"/>
</dbReference>
<dbReference type="InterPro" id="IPR002159">
    <property type="entry name" value="CD36_fam"/>
</dbReference>
<dbReference type="PANTHER" id="PTHR11923:SF93">
    <property type="entry name" value="GH07959P-RELATED"/>
    <property type="match status" value="1"/>
</dbReference>
<dbReference type="PANTHER" id="PTHR11923">
    <property type="entry name" value="SCAVENGER RECEPTOR CLASS B TYPE-1 SR-B1"/>
    <property type="match status" value="1"/>
</dbReference>
<dbReference type="Pfam" id="PF01130">
    <property type="entry name" value="CD36"/>
    <property type="match status" value="1"/>
</dbReference>
<dbReference type="PRINTS" id="PR01609">
    <property type="entry name" value="CD36FAMILY"/>
</dbReference>
<reference evidence="10" key="1">
    <citation type="journal article" date="2000" name="Science">
        <title>The genome sequence of Drosophila melanogaster.</title>
        <authorList>
            <person name="Adams M.D."/>
            <person name="Celniker S.E."/>
            <person name="Holt R.A."/>
            <person name="Evans C.A."/>
            <person name="Gocayne J.D."/>
            <person name="Amanatides P.G."/>
            <person name="Scherer S.E."/>
            <person name="Li P.W."/>
            <person name="Hoskins R.A."/>
            <person name="Galle R.F."/>
            <person name="George R.A."/>
            <person name="Lewis S.E."/>
            <person name="Richards S."/>
            <person name="Ashburner M."/>
            <person name="Henderson S.N."/>
            <person name="Sutton G.G."/>
            <person name="Wortman J.R."/>
            <person name="Yandell M.D."/>
            <person name="Zhang Q."/>
            <person name="Chen L.X."/>
            <person name="Brandon R.C."/>
            <person name="Rogers Y.-H.C."/>
            <person name="Blazej R.G."/>
            <person name="Champe M."/>
            <person name="Pfeiffer B.D."/>
            <person name="Wan K.H."/>
            <person name="Doyle C."/>
            <person name="Baxter E.G."/>
            <person name="Helt G."/>
            <person name="Nelson C.R."/>
            <person name="Miklos G.L.G."/>
            <person name="Abril J.F."/>
            <person name="Agbayani A."/>
            <person name="An H.-J."/>
            <person name="Andrews-Pfannkoch C."/>
            <person name="Baldwin D."/>
            <person name="Ballew R.M."/>
            <person name="Basu A."/>
            <person name="Baxendale J."/>
            <person name="Bayraktaroglu L."/>
            <person name="Beasley E.M."/>
            <person name="Beeson K.Y."/>
            <person name="Benos P.V."/>
            <person name="Berman B.P."/>
            <person name="Bhandari D."/>
            <person name="Bolshakov S."/>
            <person name="Borkova D."/>
            <person name="Botchan M.R."/>
            <person name="Bouck J."/>
            <person name="Brokstein P."/>
            <person name="Brottier P."/>
            <person name="Burtis K.C."/>
            <person name="Busam D.A."/>
            <person name="Butler H."/>
            <person name="Cadieu E."/>
            <person name="Center A."/>
            <person name="Chandra I."/>
            <person name="Cherry J.M."/>
            <person name="Cawley S."/>
            <person name="Dahlke C."/>
            <person name="Davenport L.B."/>
            <person name="Davies P."/>
            <person name="de Pablos B."/>
            <person name="Delcher A."/>
            <person name="Deng Z."/>
            <person name="Mays A.D."/>
            <person name="Dew I."/>
            <person name="Dietz S.M."/>
            <person name="Dodson K."/>
            <person name="Doup L.E."/>
            <person name="Downes M."/>
            <person name="Dugan-Rocha S."/>
            <person name="Dunkov B.C."/>
            <person name="Dunn P."/>
            <person name="Durbin K.J."/>
            <person name="Evangelista C.C."/>
            <person name="Ferraz C."/>
            <person name="Ferriera S."/>
            <person name="Fleischmann W."/>
            <person name="Fosler C."/>
            <person name="Gabrielian A.E."/>
            <person name="Garg N.S."/>
            <person name="Gelbart W.M."/>
            <person name="Glasser K."/>
            <person name="Glodek A."/>
            <person name="Gong F."/>
            <person name="Gorrell J.H."/>
            <person name="Gu Z."/>
            <person name="Guan P."/>
            <person name="Harris M."/>
            <person name="Harris N.L."/>
            <person name="Harvey D.A."/>
            <person name="Heiman T.J."/>
            <person name="Hernandez J.R."/>
            <person name="Houck J."/>
            <person name="Hostin D."/>
            <person name="Houston K.A."/>
            <person name="Howland T.J."/>
            <person name="Wei M.-H."/>
            <person name="Ibegwam C."/>
            <person name="Jalali M."/>
            <person name="Kalush F."/>
            <person name="Karpen G.H."/>
            <person name="Ke Z."/>
            <person name="Kennison J.A."/>
            <person name="Ketchum K.A."/>
            <person name="Kimmel B.E."/>
            <person name="Kodira C.D."/>
            <person name="Kraft C.L."/>
            <person name="Kravitz S."/>
            <person name="Kulp D."/>
            <person name="Lai Z."/>
            <person name="Lasko P."/>
            <person name="Lei Y."/>
            <person name="Levitsky A.A."/>
            <person name="Li J.H."/>
            <person name="Li Z."/>
            <person name="Liang Y."/>
            <person name="Lin X."/>
            <person name="Liu X."/>
            <person name="Mattei B."/>
            <person name="McIntosh T.C."/>
            <person name="McLeod M.P."/>
            <person name="McPherson D."/>
            <person name="Merkulov G."/>
            <person name="Milshina N.V."/>
            <person name="Mobarry C."/>
            <person name="Morris J."/>
            <person name="Moshrefi A."/>
            <person name="Mount S.M."/>
            <person name="Moy M."/>
            <person name="Murphy B."/>
            <person name="Murphy L."/>
            <person name="Muzny D.M."/>
            <person name="Nelson D.L."/>
            <person name="Nelson D.R."/>
            <person name="Nelson K.A."/>
            <person name="Nixon K."/>
            <person name="Nusskern D.R."/>
            <person name="Pacleb J.M."/>
            <person name="Palazzolo M."/>
            <person name="Pittman G.S."/>
            <person name="Pan S."/>
            <person name="Pollard J."/>
            <person name="Puri V."/>
            <person name="Reese M.G."/>
            <person name="Reinert K."/>
            <person name="Remington K."/>
            <person name="Saunders R.D.C."/>
            <person name="Scheeler F."/>
            <person name="Shen H."/>
            <person name="Shue B.C."/>
            <person name="Siden-Kiamos I."/>
            <person name="Simpson M."/>
            <person name="Skupski M.P."/>
            <person name="Smith T.J."/>
            <person name="Spier E."/>
            <person name="Spradling A.C."/>
            <person name="Stapleton M."/>
            <person name="Strong R."/>
            <person name="Sun E."/>
            <person name="Svirskas R."/>
            <person name="Tector C."/>
            <person name="Turner R."/>
            <person name="Venter E."/>
            <person name="Wang A.H."/>
            <person name="Wang X."/>
            <person name="Wang Z.-Y."/>
            <person name="Wassarman D.A."/>
            <person name="Weinstock G.M."/>
            <person name="Weissenbach J."/>
            <person name="Williams S.M."/>
            <person name="Woodage T."/>
            <person name="Worley K.C."/>
            <person name="Wu D."/>
            <person name="Yang S."/>
            <person name="Yao Q.A."/>
            <person name="Ye J."/>
            <person name="Yeh R.-F."/>
            <person name="Zaveri J.S."/>
            <person name="Zhan M."/>
            <person name="Zhang G."/>
            <person name="Zhao Q."/>
            <person name="Zheng L."/>
            <person name="Zheng X.H."/>
            <person name="Zhong F.N."/>
            <person name="Zhong W."/>
            <person name="Zhou X."/>
            <person name="Zhu S.C."/>
            <person name="Zhu X."/>
            <person name="Smith H.O."/>
            <person name="Gibbs R.A."/>
            <person name="Myers E.W."/>
            <person name="Rubin G.M."/>
            <person name="Venter J.C."/>
        </authorList>
    </citation>
    <scope>NUCLEOTIDE SEQUENCE [LARGE SCALE GENOMIC DNA]</scope>
    <source>
        <strain evidence="10">Berkeley</strain>
    </source>
</reference>
<reference evidence="10" key="2">
    <citation type="journal article" date="2002" name="Genome Biol.">
        <title>Annotation of the Drosophila melanogaster euchromatic genome: a systematic review.</title>
        <authorList>
            <person name="Misra S."/>
            <person name="Crosby M.A."/>
            <person name="Mungall C.J."/>
            <person name="Matthews B.B."/>
            <person name="Campbell K.S."/>
            <person name="Hradecky P."/>
            <person name="Huang Y."/>
            <person name="Kaminker J.S."/>
            <person name="Millburn G.H."/>
            <person name="Prochnik S.E."/>
            <person name="Smith C.D."/>
            <person name="Tupy J.L."/>
            <person name="Whitfield E.J."/>
            <person name="Bayraktaroglu L."/>
            <person name="Berman B.P."/>
            <person name="Bettencourt B.R."/>
            <person name="Celniker S.E."/>
            <person name="de Grey A.D.N.J."/>
            <person name="Drysdale R.A."/>
            <person name="Harris N.L."/>
            <person name="Richter J."/>
            <person name="Russo S."/>
            <person name="Schroeder A.J."/>
            <person name="Shu S.Q."/>
            <person name="Stapleton M."/>
            <person name="Yamada C."/>
            <person name="Ashburner M."/>
            <person name="Gelbart W.M."/>
            <person name="Rubin G.M."/>
            <person name="Lewis S.E."/>
        </authorList>
    </citation>
    <scope>GENOME REANNOTATION</scope>
    <source>
        <strain evidence="10">Berkeley</strain>
    </source>
</reference>
<reference evidence="8" key="3">
    <citation type="journal article" date="2002" name="Genome Biol.">
        <title>A Drosophila full-length cDNA resource.</title>
        <authorList>
            <person name="Stapleton M."/>
            <person name="Carlson J.W."/>
            <person name="Brokstein P."/>
            <person name="Yu C."/>
            <person name="Champe M."/>
            <person name="George R.A."/>
            <person name="Guarin H."/>
            <person name="Kronmiller B."/>
            <person name="Pacleb J.M."/>
            <person name="Park S."/>
            <person name="Wan K.H."/>
            <person name="Rubin G.M."/>
            <person name="Celniker S.E."/>
        </authorList>
    </citation>
    <scope>NUCLEOTIDE SEQUENCE [LARGE SCALE MRNA]</scope>
    <source>
        <strain evidence="8">Berkeley</strain>
        <tissue evidence="8">Embryo</tissue>
    </source>
</reference>
<reference evidence="6" key="4">
    <citation type="journal article" date="2005" name="Science">
        <title>Drosophila RNAi screen reveals CD36 family member required for mycobacterial infection.</title>
        <authorList>
            <person name="Philips J.A."/>
            <person name="Rubin E.J."/>
            <person name="Perrimon N."/>
        </authorList>
    </citation>
    <scope>FUNCTION (MICROBIAL INFECTION)</scope>
    <scope>DISRUPTION PHENOTYPE (MICROBIAL INFECTION)</scope>
</reference>
<reference evidence="6" key="5">
    <citation type="journal article" date="2011" name="Int. J. Dev. Biol.">
        <title>Expression of the Scavenger Receptor Class B type I (SR-BI) family in Drosophila melanogaster.</title>
        <authorList>
            <person name="Herboso L."/>
            <person name="Talamillo A."/>
            <person name="Perez C."/>
            <person name="Barrio R."/>
        </authorList>
    </citation>
    <scope>DEVELOPMENTAL STAGE</scope>
</reference>
<organism evidence="10">
    <name type="scientific">Drosophila melanogaster</name>
    <name type="common">Fruit fly</name>
    <dbReference type="NCBI Taxonomy" id="7227"/>
    <lineage>
        <taxon>Eukaryota</taxon>
        <taxon>Metazoa</taxon>
        <taxon>Ecdysozoa</taxon>
        <taxon>Arthropoda</taxon>
        <taxon>Hexapoda</taxon>
        <taxon>Insecta</taxon>
        <taxon>Pterygota</taxon>
        <taxon>Neoptera</taxon>
        <taxon>Endopterygota</taxon>
        <taxon>Diptera</taxon>
        <taxon>Brachycera</taxon>
        <taxon>Muscomorpha</taxon>
        <taxon>Ephydroidea</taxon>
        <taxon>Drosophilidae</taxon>
        <taxon>Drosophila</taxon>
        <taxon>Sophophora</taxon>
    </lineage>
</organism>
<feature type="chain" id="PRO_0000438383" description="Protein peste">
    <location>
        <begin position="1"/>
        <end position="555"/>
    </location>
</feature>
<feature type="topological domain" description="Cytoplasmic" evidence="6">
    <location>
        <begin position="1"/>
        <end position="7"/>
    </location>
</feature>
<feature type="transmembrane region" description="Helical" evidence="1">
    <location>
        <begin position="8"/>
        <end position="28"/>
    </location>
</feature>
<feature type="topological domain" description="Extracellular" evidence="6">
    <location>
        <begin position="29"/>
        <end position="434"/>
    </location>
</feature>
<feature type="transmembrane region" description="Helical" evidence="1">
    <location>
        <begin position="435"/>
        <end position="455"/>
    </location>
</feature>
<feature type="topological domain" description="Cytoplasmic" evidence="6">
    <location>
        <begin position="456"/>
        <end position="555"/>
    </location>
</feature>
<feature type="glycosylation site" description="N-linked (GlcNAc...) asparagine" evidence="2">
    <location>
        <position position="70"/>
    </location>
</feature>
<feature type="glycosylation site" description="N-linked (GlcNAc...) asparagine" evidence="2">
    <location>
        <position position="110"/>
    </location>
</feature>
<feature type="glycosylation site" description="N-linked (GlcNAc...) asparagine" evidence="2">
    <location>
        <position position="129"/>
    </location>
</feature>
<feature type="glycosylation site" description="N-linked (GlcNAc...) asparagine" evidence="2">
    <location>
        <position position="213"/>
    </location>
</feature>
<feature type="glycosylation site" description="N-linked (GlcNAc...) asparagine" evidence="2">
    <location>
        <position position="242"/>
    </location>
</feature>
<feature type="glycosylation site" description="N-linked (GlcNAc...) asparagine" evidence="2">
    <location>
        <position position="312"/>
    </location>
</feature>
<feature type="glycosylation site" description="N-linked (GlcNAc...) asparagine" evidence="2">
    <location>
        <position position="342"/>
    </location>
</feature>
<keyword id="KW-1003">Cell membrane</keyword>
<keyword id="KW-0325">Glycoprotein</keyword>
<keyword id="KW-0472">Membrane</keyword>
<keyword id="KW-1185">Reference proteome</keyword>
<keyword id="KW-0812">Transmembrane</keyword>
<keyword id="KW-1133">Transmembrane helix</keyword>
<gene>
    <name evidence="9" type="primary">pes</name>
    <name evidence="9" type="ORF">CG7228</name>
</gene>
<protein>
    <recommendedName>
        <fullName evidence="5">Protein peste</fullName>
    </recommendedName>
</protein>
<sequence>MTSRTRHCARLGIVLLGICCIASGIYLFRNWIDMFTRMRGQEMALSPNSRSFEGWKVSPLPLDFDIYLFNWTNPDDFYVGSNKKPHFEQLGPYRFREKPDKVDIEWHNHNASVSFHKKSWFYFDAAGSNGSLWDKVTTVNSVAHSAARRAAVDWFARTGVNIANKLYRQGVTITKTVDEMLFKGYEHPFISVGKLLRPQDVPYKRIGYHYPRNGSSEFDGDINMFTGADDIAKMGQIHTWNNLTHTGAFEGTCGQVHGSMGEFFPPNLGTKDTVYMYMPKMCRAIPLDYVETVTVHGVTAYKFSGTRHAVDNGTLYPDTRCYCVGGKCMPSGVINIGPCSFNASVYMSFPHFYMADPSYLEAIEGLRPEREKHEFFMALEPNAGVPMDVGGGFQANYYMEPIPGITLYENVPTVMIPMMWCEERVRVSEEIAADIALVPLIVLLGQIVTGILLAGGLICTCWYPTRQVTHFCHSDPKAKASVLRPLNAFGVNSSAATAPVAQLFRNNISSSGNERVGVRLLDYNRDSGIRLESGTMESSHRERLISEDSPDVVVR</sequence>
<evidence type="ECO:0000255" key="1"/>
<evidence type="ECO:0000255" key="2">
    <source>
        <dbReference type="PROSITE-ProRule" id="PRU00498"/>
    </source>
</evidence>
<evidence type="ECO:0000269" key="3">
    <source>
    </source>
</evidence>
<evidence type="ECO:0000269" key="4">
    <source>
    </source>
</evidence>
<evidence type="ECO:0000303" key="5">
    <source>
    </source>
</evidence>
<evidence type="ECO:0000305" key="6"/>
<evidence type="ECO:0000305" key="7">
    <source>
    </source>
</evidence>
<evidence type="ECO:0000312" key="8">
    <source>
        <dbReference type="EMBL" id="AAL89869.1"/>
    </source>
</evidence>
<evidence type="ECO:0000312" key="9">
    <source>
        <dbReference type="FlyBase" id="FBgn0031969"/>
    </source>
</evidence>
<evidence type="ECO:0000312" key="10">
    <source>
        <dbReference type="Proteomes" id="UP000000803"/>
    </source>
</evidence>
<comment type="function">
    <text evidence="3">(Microbial infection) Plays a role in mycobacterial infection. Mediates infection by M.fortuitum and uptake of M.smegmatis.</text>
</comment>
<comment type="subcellular location">
    <subcellularLocation>
        <location evidence="1">Cell membrane</location>
        <topology evidence="1">Multi-pass membrane protein</topology>
    </subcellularLocation>
</comment>
<comment type="developmental stage">
    <text evidence="4">Detected in all examined tissues of L3 instar larvae. Expression in the ring gland and anterior spiracles increases during development. In the ovaries it is predominantly expressed in one pole, and in the anterior spiracles it is mostly expressed in the spiracular gland. Ubiquitously expressed throughout the testis and alimentary tract.</text>
</comment>
<comment type="disruption phenotype">
    <text evidence="3">(Microbial infection) RNAi-mediated knockdown blocks infection by M.fortuitum and uptake of M.smegmatis.</text>
</comment>
<comment type="miscellaneous">
    <text evidence="7">The name 'peste' means plague in Latin and derives from its role in bacterial infection.</text>
</comment>
<comment type="similarity">
    <text evidence="6">Belongs to the CD36 family.</text>
</comment>
<comment type="sequence caution" evidence="6">
    <conflict type="erroneous initiation">
        <sequence resource="EMBL-CDS" id="AAL89869"/>
    </conflict>
    <text>Extended N-terminus.</text>
</comment>
<accession>B7Z031</accession>
<accession>Q8SXU4</accession>
<accession>Q9VLU8</accession>
<proteinExistence type="evidence at transcript level"/>
<name>PESTE_DROME</name>